<gene>
    <name evidence="1" type="primary">gpsB</name>
    <name type="ordered locus">SUB1404</name>
</gene>
<accession>B9DV61</accession>
<name>GPSB_STRU0</name>
<proteinExistence type="inferred from homology"/>
<protein>
    <recommendedName>
        <fullName evidence="1">Cell cycle protein GpsB</fullName>
    </recommendedName>
    <alternativeName>
        <fullName evidence="1">Guiding PBP1-shuttling protein</fullName>
    </alternativeName>
</protein>
<keyword id="KW-0131">Cell cycle</keyword>
<keyword id="KW-0132">Cell division</keyword>
<keyword id="KW-0133">Cell shape</keyword>
<keyword id="KW-0175">Coiled coil</keyword>
<keyword id="KW-0963">Cytoplasm</keyword>
<keyword id="KW-1185">Reference proteome</keyword>
<sequence>MASIIYSPKDIFEQEFKTSMSGFNKKEVDEFLDNVIQDYETYISEIEELKAEIERLKNQNTHPKSPSTENRHAMVQPTRVAQSATNFDILKRISRLEKEVFGKQITE</sequence>
<feature type="chain" id="PRO_1000189502" description="Cell cycle protein GpsB">
    <location>
        <begin position="1"/>
        <end position="107"/>
    </location>
</feature>
<feature type="region of interest" description="Disordered" evidence="2">
    <location>
        <begin position="57"/>
        <end position="80"/>
    </location>
</feature>
<feature type="coiled-coil region" evidence="1">
    <location>
        <begin position="32"/>
        <end position="65"/>
    </location>
</feature>
<feature type="compositionally biased region" description="Polar residues" evidence="2">
    <location>
        <begin position="58"/>
        <end position="68"/>
    </location>
</feature>
<comment type="function">
    <text evidence="1">Divisome component that associates with the complex late in its assembly, after the Z-ring is formed, and is dependent on DivIC and PBP2B for its recruitment to the divisome. Together with EzrA, is a key component of the system that regulates PBP1 localization during cell cycle progression. Its main role could be the removal of PBP1 from the cell pole after pole maturation is completed. Also contributes to the recruitment of PBP1 to the division complex. Not essential for septum formation.</text>
</comment>
<comment type="subunit">
    <text evidence="1">Forms polymers through the coiled coil domains. Interacts with PBP1, MreC and EzrA.</text>
</comment>
<comment type="subcellular location">
    <subcellularLocation>
        <location evidence="1">Cytoplasm</location>
    </subcellularLocation>
    <text evidence="1">Shuttles between the lateral wall and the division site in a cell cycle-dependent manner.</text>
</comment>
<comment type="similarity">
    <text evidence="1">Belongs to the GpsB family.</text>
</comment>
<reference key="1">
    <citation type="journal article" date="2009" name="BMC Genomics">
        <title>Evidence for niche adaptation in the genome of the bovine pathogen Streptococcus uberis.</title>
        <authorList>
            <person name="Ward P.N."/>
            <person name="Holden M.T.G."/>
            <person name="Leigh J.A."/>
            <person name="Lennard N."/>
            <person name="Bignell A."/>
            <person name="Barron A."/>
            <person name="Clark L."/>
            <person name="Quail M.A."/>
            <person name="Woodward J."/>
            <person name="Barrell B.G."/>
            <person name="Egan S.A."/>
            <person name="Field T.R."/>
            <person name="Maskell D."/>
            <person name="Kehoe M."/>
            <person name="Dowson C.G."/>
            <person name="Chanter N."/>
            <person name="Whatmore A.M."/>
            <person name="Bentley S.D."/>
            <person name="Parkhill J."/>
        </authorList>
    </citation>
    <scope>NUCLEOTIDE SEQUENCE [LARGE SCALE GENOMIC DNA]</scope>
    <source>
        <strain>ATCC BAA-854 / 0140J</strain>
    </source>
</reference>
<evidence type="ECO:0000255" key="1">
    <source>
        <dbReference type="HAMAP-Rule" id="MF_02011"/>
    </source>
</evidence>
<evidence type="ECO:0000256" key="2">
    <source>
        <dbReference type="SAM" id="MobiDB-lite"/>
    </source>
</evidence>
<dbReference type="EMBL" id="AM946015">
    <property type="protein sequence ID" value="CAR43042.1"/>
    <property type="molecule type" value="Genomic_DNA"/>
</dbReference>
<dbReference type="RefSeq" id="WP_015911724.1">
    <property type="nucleotide sequence ID" value="NC_012004.1"/>
</dbReference>
<dbReference type="SMR" id="B9DV61"/>
<dbReference type="STRING" id="218495.SUB1404"/>
<dbReference type="GeneID" id="93826727"/>
<dbReference type="KEGG" id="sub:SUB1404"/>
<dbReference type="eggNOG" id="COG3599">
    <property type="taxonomic scope" value="Bacteria"/>
</dbReference>
<dbReference type="HOGENOM" id="CLU_140309_1_0_9"/>
<dbReference type="OrthoDB" id="389699at2"/>
<dbReference type="Proteomes" id="UP000000449">
    <property type="component" value="Chromosome"/>
</dbReference>
<dbReference type="GO" id="GO:0005737">
    <property type="term" value="C:cytoplasm"/>
    <property type="evidence" value="ECO:0007669"/>
    <property type="project" value="UniProtKB-SubCell"/>
</dbReference>
<dbReference type="GO" id="GO:0051301">
    <property type="term" value="P:cell division"/>
    <property type="evidence" value="ECO:0007669"/>
    <property type="project" value="UniProtKB-UniRule"/>
</dbReference>
<dbReference type="GO" id="GO:0008360">
    <property type="term" value="P:regulation of cell shape"/>
    <property type="evidence" value="ECO:0007669"/>
    <property type="project" value="UniProtKB-UniRule"/>
</dbReference>
<dbReference type="Gene3D" id="6.10.250.660">
    <property type="match status" value="1"/>
</dbReference>
<dbReference type="HAMAP" id="MF_02011">
    <property type="entry name" value="GpsB"/>
    <property type="match status" value="1"/>
</dbReference>
<dbReference type="InterPro" id="IPR011229">
    <property type="entry name" value="Cell_cycle_GpsB"/>
</dbReference>
<dbReference type="InterPro" id="IPR019933">
    <property type="entry name" value="DivIVA_domain"/>
</dbReference>
<dbReference type="InterPro" id="IPR007793">
    <property type="entry name" value="DivIVA_fam"/>
</dbReference>
<dbReference type="NCBIfam" id="TIGR03544">
    <property type="entry name" value="DivI1A_domain"/>
    <property type="match status" value="1"/>
</dbReference>
<dbReference type="NCBIfam" id="NF010725">
    <property type="entry name" value="PRK14127.1"/>
    <property type="match status" value="1"/>
</dbReference>
<dbReference type="PANTHER" id="PTHR35794:SF1">
    <property type="entry name" value="CELL CYCLE PROTEIN GPSB"/>
    <property type="match status" value="1"/>
</dbReference>
<dbReference type="PANTHER" id="PTHR35794">
    <property type="entry name" value="CELL DIVISION PROTEIN DIVIVA"/>
    <property type="match status" value="1"/>
</dbReference>
<dbReference type="Pfam" id="PF05103">
    <property type="entry name" value="DivIVA"/>
    <property type="match status" value="1"/>
</dbReference>
<dbReference type="PIRSF" id="PIRSF029938">
    <property type="entry name" value="UCP029938"/>
    <property type="match status" value="1"/>
</dbReference>
<organism>
    <name type="scientific">Streptococcus uberis (strain ATCC BAA-854 / 0140J)</name>
    <dbReference type="NCBI Taxonomy" id="218495"/>
    <lineage>
        <taxon>Bacteria</taxon>
        <taxon>Bacillati</taxon>
        <taxon>Bacillota</taxon>
        <taxon>Bacilli</taxon>
        <taxon>Lactobacillales</taxon>
        <taxon>Streptococcaceae</taxon>
        <taxon>Streptococcus</taxon>
    </lineage>
</organism>